<sequence>MKDVIKDLSELRMSYEKGELHEAQVDTHPHEQFLQWFNHALQSNLHEPYAMSLATCNRQGRPHVRTVLLRGATAQGYDFYTNYDSQKGIDLAENPYAELLFYWPSLERQVRIGGIVNKISEHESTDYYHKRPRDSQIAAHISTPQSGIIANREELQQRFNRLYEQVGQQTVLSKPEFWGGYRLQADYYEFWQGRPNRLHDRLSYQNTDGTWVVQRLMP</sequence>
<keyword id="KW-0285">Flavoprotein</keyword>
<keyword id="KW-0288">FMN</keyword>
<keyword id="KW-0560">Oxidoreductase</keyword>
<keyword id="KW-0664">Pyridoxine biosynthesis</keyword>
<comment type="function">
    <text evidence="1">Catalyzes the oxidation of either pyridoxine 5'-phosphate (PNP) or pyridoxamine 5'-phosphate (PMP) into pyridoxal 5'-phosphate (PLP).</text>
</comment>
<comment type="catalytic activity">
    <reaction evidence="1">
        <text>pyridoxamine 5'-phosphate + O2 + H2O = pyridoxal 5'-phosphate + H2O2 + NH4(+)</text>
        <dbReference type="Rhea" id="RHEA:15817"/>
        <dbReference type="ChEBI" id="CHEBI:15377"/>
        <dbReference type="ChEBI" id="CHEBI:15379"/>
        <dbReference type="ChEBI" id="CHEBI:16240"/>
        <dbReference type="ChEBI" id="CHEBI:28938"/>
        <dbReference type="ChEBI" id="CHEBI:58451"/>
        <dbReference type="ChEBI" id="CHEBI:597326"/>
        <dbReference type="EC" id="1.4.3.5"/>
    </reaction>
</comment>
<comment type="catalytic activity">
    <reaction evidence="1">
        <text>pyridoxine 5'-phosphate + O2 = pyridoxal 5'-phosphate + H2O2</text>
        <dbReference type="Rhea" id="RHEA:15149"/>
        <dbReference type="ChEBI" id="CHEBI:15379"/>
        <dbReference type="ChEBI" id="CHEBI:16240"/>
        <dbReference type="ChEBI" id="CHEBI:58589"/>
        <dbReference type="ChEBI" id="CHEBI:597326"/>
        <dbReference type="EC" id="1.4.3.5"/>
    </reaction>
</comment>
<comment type="cofactor">
    <cofactor evidence="1">
        <name>FMN</name>
        <dbReference type="ChEBI" id="CHEBI:58210"/>
    </cofactor>
    <text evidence="1">Binds 1 FMN per subunit.</text>
</comment>
<comment type="pathway">
    <text evidence="1">Cofactor metabolism; pyridoxal 5'-phosphate salvage; pyridoxal 5'-phosphate from pyridoxamine 5'-phosphate: step 1/1.</text>
</comment>
<comment type="pathway">
    <text evidence="1">Cofactor metabolism; pyridoxal 5'-phosphate salvage; pyridoxal 5'-phosphate from pyridoxine 5'-phosphate: step 1/1.</text>
</comment>
<comment type="subunit">
    <text evidence="1">Homodimer.</text>
</comment>
<comment type="similarity">
    <text evidence="1">Belongs to the pyridoxamine 5'-phosphate oxidase family.</text>
</comment>
<organism>
    <name type="scientific">Acinetobacter baylyi (strain ATCC 33305 / BD413 / ADP1)</name>
    <dbReference type="NCBI Taxonomy" id="62977"/>
    <lineage>
        <taxon>Bacteria</taxon>
        <taxon>Pseudomonadati</taxon>
        <taxon>Pseudomonadota</taxon>
        <taxon>Gammaproteobacteria</taxon>
        <taxon>Moraxellales</taxon>
        <taxon>Moraxellaceae</taxon>
        <taxon>Acinetobacter</taxon>
    </lineage>
</organism>
<name>PDXH_ACIAD</name>
<accession>Q6F718</accession>
<evidence type="ECO:0000255" key="1">
    <source>
        <dbReference type="HAMAP-Rule" id="MF_01629"/>
    </source>
</evidence>
<proteinExistence type="inferred from homology"/>
<protein>
    <recommendedName>
        <fullName evidence="1">Pyridoxine/pyridoxamine 5'-phosphate oxidase</fullName>
        <ecNumber evidence="1">1.4.3.5</ecNumber>
    </recommendedName>
    <alternativeName>
        <fullName evidence="1">PNP/PMP oxidase</fullName>
        <shortName evidence="1">PNPOx</shortName>
    </alternativeName>
    <alternativeName>
        <fullName evidence="1">Pyridoxal 5'-phosphate synthase</fullName>
    </alternativeName>
</protein>
<gene>
    <name evidence="1" type="primary">pdxH</name>
    <name type="ordered locus">ACIAD3501</name>
</gene>
<feature type="chain" id="PRO_0000167677" description="Pyridoxine/pyridoxamine 5'-phosphate oxidase">
    <location>
        <begin position="1"/>
        <end position="218"/>
    </location>
</feature>
<feature type="binding site" evidence="1">
    <location>
        <begin position="12"/>
        <end position="15"/>
    </location>
    <ligand>
        <name>substrate</name>
    </ligand>
</feature>
<feature type="binding site" evidence="1">
    <location>
        <begin position="65"/>
        <end position="70"/>
    </location>
    <ligand>
        <name>FMN</name>
        <dbReference type="ChEBI" id="CHEBI:58210"/>
    </ligand>
</feature>
<feature type="binding site" evidence="1">
    <location>
        <position position="70"/>
    </location>
    <ligand>
        <name>substrate</name>
    </ligand>
</feature>
<feature type="binding site" evidence="1">
    <location>
        <begin position="80"/>
        <end position="81"/>
    </location>
    <ligand>
        <name>FMN</name>
        <dbReference type="ChEBI" id="CHEBI:58210"/>
    </ligand>
</feature>
<feature type="binding site" evidence="1">
    <location>
        <position position="87"/>
    </location>
    <ligand>
        <name>FMN</name>
        <dbReference type="ChEBI" id="CHEBI:58210"/>
    </ligand>
</feature>
<feature type="binding site" evidence="1">
    <location>
        <position position="109"/>
    </location>
    <ligand>
        <name>FMN</name>
        <dbReference type="ChEBI" id="CHEBI:58210"/>
    </ligand>
</feature>
<feature type="binding site" evidence="1">
    <location>
        <position position="127"/>
    </location>
    <ligand>
        <name>substrate</name>
    </ligand>
</feature>
<feature type="binding site" evidence="1">
    <location>
        <position position="131"/>
    </location>
    <ligand>
        <name>substrate</name>
    </ligand>
</feature>
<feature type="binding site" evidence="1">
    <location>
        <position position="135"/>
    </location>
    <ligand>
        <name>substrate</name>
    </ligand>
</feature>
<feature type="binding site" evidence="1">
    <location>
        <begin position="145"/>
        <end position="146"/>
    </location>
    <ligand>
        <name>FMN</name>
        <dbReference type="ChEBI" id="CHEBI:58210"/>
    </ligand>
</feature>
<feature type="binding site" evidence="1">
    <location>
        <position position="191"/>
    </location>
    <ligand>
        <name>FMN</name>
        <dbReference type="ChEBI" id="CHEBI:58210"/>
    </ligand>
</feature>
<feature type="binding site" evidence="1">
    <location>
        <begin position="197"/>
        <end position="199"/>
    </location>
    <ligand>
        <name>substrate</name>
    </ligand>
</feature>
<feature type="binding site" evidence="1">
    <location>
        <position position="201"/>
    </location>
    <ligand>
        <name>FMN</name>
        <dbReference type="ChEBI" id="CHEBI:58210"/>
    </ligand>
</feature>
<reference key="1">
    <citation type="journal article" date="2004" name="Nucleic Acids Res.">
        <title>Unique features revealed by the genome sequence of Acinetobacter sp. ADP1, a versatile and naturally transformation competent bacterium.</title>
        <authorList>
            <person name="Barbe V."/>
            <person name="Vallenet D."/>
            <person name="Fonknechten N."/>
            <person name="Kreimeyer A."/>
            <person name="Oztas S."/>
            <person name="Labarre L."/>
            <person name="Cruveiller S."/>
            <person name="Robert C."/>
            <person name="Duprat S."/>
            <person name="Wincker P."/>
            <person name="Ornston L.N."/>
            <person name="Weissenbach J."/>
            <person name="Marliere P."/>
            <person name="Cohen G.N."/>
            <person name="Medigue C."/>
        </authorList>
    </citation>
    <scope>NUCLEOTIDE SEQUENCE [LARGE SCALE GENOMIC DNA]</scope>
    <source>
        <strain>ATCC 33305 / BD413 / ADP1</strain>
    </source>
</reference>
<dbReference type="EC" id="1.4.3.5" evidence="1"/>
<dbReference type="EMBL" id="CR543861">
    <property type="protein sequence ID" value="CAG70147.1"/>
    <property type="molecule type" value="Genomic_DNA"/>
</dbReference>
<dbReference type="RefSeq" id="WP_004923370.1">
    <property type="nucleotide sequence ID" value="NC_005966.1"/>
</dbReference>
<dbReference type="SMR" id="Q6F718"/>
<dbReference type="STRING" id="202950.GCA_001485005_01709"/>
<dbReference type="GeneID" id="45235680"/>
<dbReference type="KEGG" id="aci:ACIAD3501"/>
<dbReference type="eggNOG" id="COG0259">
    <property type="taxonomic scope" value="Bacteria"/>
</dbReference>
<dbReference type="HOGENOM" id="CLU_032263_2_2_6"/>
<dbReference type="OrthoDB" id="9780392at2"/>
<dbReference type="BioCyc" id="ASP62977:ACIAD_RS15830-MONOMER"/>
<dbReference type="UniPathway" id="UPA01068">
    <property type="reaction ID" value="UER00304"/>
</dbReference>
<dbReference type="UniPathway" id="UPA01068">
    <property type="reaction ID" value="UER00305"/>
</dbReference>
<dbReference type="Proteomes" id="UP000000430">
    <property type="component" value="Chromosome"/>
</dbReference>
<dbReference type="GO" id="GO:0010181">
    <property type="term" value="F:FMN binding"/>
    <property type="evidence" value="ECO:0007669"/>
    <property type="project" value="UniProtKB-UniRule"/>
</dbReference>
<dbReference type="GO" id="GO:0004733">
    <property type="term" value="F:pyridoxamine phosphate oxidase activity"/>
    <property type="evidence" value="ECO:0007669"/>
    <property type="project" value="UniProtKB-UniRule"/>
</dbReference>
<dbReference type="GO" id="GO:0008615">
    <property type="term" value="P:pyridoxine biosynthetic process"/>
    <property type="evidence" value="ECO:0007669"/>
    <property type="project" value="UniProtKB-KW"/>
</dbReference>
<dbReference type="FunFam" id="2.30.110.10:FF:000020">
    <property type="entry name" value="PNPO isoform 11"/>
    <property type="match status" value="1"/>
</dbReference>
<dbReference type="Gene3D" id="2.30.110.10">
    <property type="entry name" value="Electron Transport, Fmn-binding Protein, Chain A"/>
    <property type="match status" value="1"/>
</dbReference>
<dbReference type="HAMAP" id="MF_01629">
    <property type="entry name" value="PdxH"/>
    <property type="match status" value="1"/>
</dbReference>
<dbReference type="InterPro" id="IPR000659">
    <property type="entry name" value="Pyridox_Oxase"/>
</dbReference>
<dbReference type="InterPro" id="IPR019740">
    <property type="entry name" value="Pyridox_Oxase_CS"/>
</dbReference>
<dbReference type="InterPro" id="IPR011576">
    <property type="entry name" value="Pyridox_Oxase_N"/>
</dbReference>
<dbReference type="InterPro" id="IPR019576">
    <property type="entry name" value="Pyridoxamine_oxidase_dimer_C"/>
</dbReference>
<dbReference type="InterPro" id="IPR012349">
    <property type="entry name" value="Split_barrel_FMN-bd"/>
</dbReference>
<dbReference type="NCBIfam" id="TIGR00558">
    <property type="entry name" value="pdxH"/>
    <property type="match status" value="1"/>
</dbReference>
<dbReference type="NCBIfam" id="NF004231">
    <property type="entry name" value="PRK05679.1"/>
    <property type="match status" value="1"/>
</dbReference>
<dbReference type="PANTHER" id="PTHR10851:SF0">
    <property type="entry name" value="PYRIDOXINE-5'-PHOSPHATE OXIDASE"/>
    <property type="match status" value="1"/>
</dbReference>
<dbReference type="PANTHER" id="PTHR10851">
    <property type="entry name" value="PYRIDOXINE-5-PHOSPHATE OXIDASE"/>
    <property type="match status" value="1"/>
</dbReference>
<dbReference type="Pfam" id="PF10590">
    <property type="entry name" value="PNP_phzG_C"/>
    <property type="match status" value="1"/>
</dbReference>
<dbReference type="Pfam" id="PF01243">
    <property type="entry name" value="PNPOx_N"/>
    <property type="match status" value="1"/>
</dbReference>
<dbReference type="PIRSF" id="PIRSF000190">
    <property type="entry name" value="Pyd_amn-ph_oxd"/>
    <property type="match status" value="1"/>
</dbReference>
<dbReference type="SUPFAM" id="SSF50475">
    <property type="entry name" value="FMN-binding split barrel"/>
    <property type="match status" value="1"/>
</dbReference>
<dbReference type="PROSITE" id="PS01064">
    <property type="entry name" value="PYRIDOX_OXIDASE"/>
    <property type="match status" value="1"/>
</dbReference>